<proteinExistence type="inferred from homology"/>
<keyword id="KW-0479">Metal-binding</keyword>
<keyword id="KW-1185">Reference proteome</keyword>
<keyword id="KW-0687">Ribonucleoprotein</keyword>
<keyword id="KW-0689">Ribosomal protein</keyword>
<keyword id="KW-0694">RNA-binding</keyword>
<keyword id="KW-0699">rRNA-binding</keyword>
<keyword id="KW-0862">Zinc</keyword>
<protein>
    <recommendedName>
        <fullName evidence="1">Small ribosomal subunit protein uS14B</fullName>
    </recommendedName>
    <alternativeName>
        <fullName evidence="2">30S ribosomal protein S14 type Z</fullName>
    </alternativeName>
</protein>
<sequence>MAKKALVNKAAGKPRFAVRAYTRCSKCGRPRAVYRKFGLCRICLREMAHAGELPGVQKSSW</sequence>
<accession>A5U0A3</accession>
<gene>
    <name evidence="1" type="primary">rpsZ</name>
    <name evidence="1" type="synonym">rpsN</name>
    <name type="ordered locus">MRA_0725</name>
</gene>
<organism>
    <name type="scientific">Mycobacterium tuberculosis (strain ATCC 25177 / H37Ra)</name>
    <dbReference type="NCBI Taxonomy" id="419947"/>
    <lineage>
        <taxon>Bacteria</taxon>
        <taxon>Bacillati</taxon>
        <taxon>Actinomycetota</taxon>
        <taxon>Actinomycetes</taxon>
        <taxon>Mycobacteriales</taxon>
        <taxon>Mycobacteriaceae</taxon>
        <taxon>Mycobacterium</taxon>
        <taxon>Mycobacterium tuberculosis complex</taxon>
    </lineage>
</organism>
<name>RS14Z_MYCTA</name>
<evidence type="ECO:0000255" key="1">
    <source>
        <dbReference type="HAMAP-Rule" id="MF_01364"/>
    </source>
</evidence>
<evidence type="ECO:0000305" key="2"/>
<feature type="chain" id="PRO_1000067956" description="Small ribosomal subunit protein uS14B">
    <location>
        <begin position="1"/>
        <end position="61"/>
    </location>
</feature>
<feature type="binding site" evidence="1">
    <location>
        <position position="24"/>
    </location>
    <ligand>
        <name>Zn(2+)</name>
        <dbReference type="ChEBI" id="CHEBI:29105"/>
    </ligand>
</feature>
<feature type="binding site" evidence="1">
    <location>
        <position position="27"/>
    </location>
    <ligand>
        <name>Zn(2+)</name>
        <dbReference type="ChEBI" id="CHEBI:29105"/>
    </ligand>
</feature>
<feature type="binding site" evidence="1">
    <location>
        <position position="40"/>
    </location>
    <ligand>
        <name>Zn(2+)</name>
        <dbReference type="ChEBI" id="CHEBI:29105"/>
    </ligand>
</feature>
<feature type="binding site" evidence="1">
    <location>
        <position position="43"/>
    </location>
    <ligand>
        <name>Zn(2+)</name>
        <dbReference type="ChEBI" id="CHEBI:29105"/>
    </ligand>
</feature>
<dbReference type="EMBL" id="CP000611">
    <property type="protein sequence ID" value="ABQ72453.1"/>
    <property type="molecule type" value="Genomic_DNA"/>
</dbReference>
<dbReference type="RefSeq" id="WP_003403667.1">
    <property type="nucleotide sequence ID" value="NZ_CP016972.1"/>
</dbReference>
<dbReference type="SMR" id="A5U0A3"/>
<dbReference type="KEGG" id="mra:MRA_0725"/>
<dbReference type="eggNOG" id="COG0199">
    <property type="taxonomic scope" value="Bacteria"/>
</dbReference>
<dbReference type="HOGENOM" id="CLU_139869_3_0_11"/>
<dbReference type="Proteomes" id="UP000001988">
    <property type="component" value="Chromosome"/>
</dbReference>
<dbReference type="GO" id="GO:0005737">
    <property type="term" value="C:cytoplasm"/>
    <property type="evidence" value="ECO:0007669"/>
    <property type="project" value="UniProtKB-ARBA"/>
</dbReference>
<dbReference type="GO" id="GO:0015935">
    <property type="term" value="C:small ribosomal subunit"/>
    <property type="evidence" value="ECO:0007669"/>
    <property type="project" value="TreeGrafter"/>
</dbReference>
<dbReference type="GO" id="GO:0019843">
    <property type="term" value="F:rRNA binding"/>
    <property type="evidence" value="ECO:0007669"/>
    <property type="project" value="UniProtKB-UniRule"/>
</dbReference>
<dbReference type="GO" id="GO:0003735">
    <property type="term" value="F:structural constituent of ribosome"/>
    <property type="evidence" value="ECO:0007669"/>
    <property type="project" value="InterPro"/>
</dbReference>
<dbReference type="GO" id="GO:0008270">
    <property type="term" value="F:zinc ion binding"/>
    <property type="evidence" value="ECO:0007669"/>
    <property type="project" value="UniProtKB-UniRule"/>
</dbReference>
<dbReference type="GO" id="GO:0006412">
    <property type="term" value="P:translation"/>
    <property type="evidence" value="ECO:0007669"/>
    <property type="project" value="UniProtKB-UniRule"/>
</dbReference>
<dbReference type="FunFam" id="4.10.830.10:FF:000001">
    <property type="entry name" value="30S ribosomal protein S14 type Z"/>
    <property type="match status" value="1"/>
</dbReference>
<dbReference type="Gene3D" id="4.10.830.10">
    <property type="entry name" value="30s Ribosomal Protein S14, Chain N"/>
    <property type="match status" value="1"/>
</dbReference>
<dbReference type="HAMAP" id="MF_01364_B">
    <property type="entry name" value="Ribosomal_uS14_2_B"/>
    <property type="match status" value="1"/>
</dbReference>
<dbReference type="InterPro" id="IPR001209">
    <property type="entry name" value="Ribosomal_uS14"/>
</dbReference>
<dbReference type="InterPro" id="IPR023053">
    <property type="entry name" value="Ribosomal_uS14_bact"/>
</dbReference>
<dbReference type="InterPro" id="IPR018271">
    <property type="entry name" value="Ribosomal_uS14_CS"/>
</dbReference>
<dbReference type="InterPro" id="IPR043140">
    <property type="entry name" value="Ribosomal_uS14_sf"/>
</dbReference>
<dbReference type="NCBIfam" id="NF005974">
    <property type="entry name" value="PRK08061.1"/>
    <property type="match status" value="1"/>
</dbReference>
<dbReference type="PANTHER" id="PTHR19836">
    <property type="entry name" value="30S RIBOSOMAL PROTEIN S14"/>
    <property type="match status" value="1"/>
</dbReference>
<dbReference type="PANTHER" id="PTHR19836:SF19">
    <property type="entry name" value="SMALL RIBOSOMAL SUBUNIT PROTEIN US14M"/>
    <property type="match status" value="1"/>
</dbReference>
<dbReference type="Pfam" id="PF00253">
    <property type="entry name" value="Ribosomal_S14"/>
    <property type="match status" value="1"/>
</dbReference>
<dbReference type="SUPFAM" id="SSF57716">
    <property type="entry name" value="Glucocorticoid receptor-like (DNA-binding domain)"/>
    <property type="match status" value="1"/>
</dbReference>
<dbReference type="PROSITE" id="PS00527">
    <property type="entry name" value="RIBOSOMAL_S14"/>
    <property type="match status" value="1"/>
</dbReference>
<reference key="1">
    <citation type="journal article" date="2008" name="PLoS ONE">
        <title>Genetic basis of virulence attenuation revealed by comparative genomic analysis of Mycobacterium tuberculosis strain H37Ra versus H37Rv.</title>
        <authorList>
            <person name="Zheng H."/>
            <person name="Lu L."/>
            <person name="Wang B."/>
            <person name="Pu S."/>
            <person name="Zhang X."/>
            <person name="Zhu G."/>
            <person name="Shi W."/>
            <person name="Zhang L."/>
            <person name="Wang H."/>
            <person name="Wang S."/>
            <person name="Zhao G."/>
            <person name="Zhang Y."/>
        </authorList>
    </citation>
    <scope>NUCLEOTIDE SEQUENCE [LARGE SCALE GENOMIC DNA]</scope>
    <source>
        <strain>ATCC 25177 / H37Ra</strain>
    </source>
</reference>
<comment type="function">
    <text evidence="1">Binds 16S rRNA, required for the assembly of 30S particles and may also be responsible for determining the conformation of the 16S rRNA at the A site.</text>
</comment>
<comment type="cofactor">
    <cofactor evidence="1">
        <name>Zn(2+)</name>
        <dbReference type="ChEBI" id="CHEBI:29105"/>
    </cofactor>
    <text evidence="1">Binds 1 zinc ion per subunit.</text>
</comment>
<comment type="subunit">
    <text evidence="1">Part of the 30S ribosomal subunit. Contacts proteins S3 and S10.</text>
</comment>
<comment type="similarity">
    <text evidence="1">Belongs to the universal ribosomal protein uS14 family. Zinc-binding uS14 subfamily.</text>
</comment>